<sequence>MAAPGEALTSSGYIAHHLSNLSLAKLGLVADEASFWNVHIDSLFFSWFTGLIFLGIFYKVAKRTTAGVPGKLQCAVEMIVEFVAENVKDTFHGRNPLIAPLALTIFCWVFLMNVMDLVPIDFLPYPAEHWLGIPYLKVVPSADVNITMAMALGVFALMIYYSIKVKGLGGFAKELALHPFNHPLMIPFNLLIEVVSLLAKPLSLGMRLFGNMFAGEVVFILCAAMLPWYLQWMGSLPWAIFHILVITIQAFVFMMLTIVYLSMAHEDSDH</sequence>
<organism>
    <name type="scientific">Vibrio campbellii (strain ATCC BAA-1116)</name>
    <dbReference type="NCBI Taxonomy" id="2902295"/>
    <lineage>
        <taxon>Bacteria</taxon>
        <taxon>Pseudomonadati</taxon>
        <taxon>Pseudomonadota</taxon>
        <taxon>Gammaproteobacteria</taxon>
        <taxon>Vibrionales</taxon>
        <taxon>Vibrionaceae</taxon>
        <taxon>Vibrio</taxon>
    </lineage>
</organism>
<comment type="function">
    <text evidence="1">Key component of the proton channel; it plays a direct role in the translocation of protons across the membrane.</text>
</comment>
<comment type="subunit">
    <text evidence="1">F-type ATPases have 2 components, CF(1) - the catalytic core - and CF(0) - the membrane proton channel. CF(1) has five subunits: alpha(3), beta(3), gamma(1), delta(1), epsilon(1). CF(0) has three main subunits: a(1), b(2) and c(9-12). The alpha and beta chains form an alternating ring which encloses part of the gamma chain. CF(1) is attached to CF(0) by a central stalk formed by the gamma and epsilon chains, while a peripheral stalk is formed by the delta and b chains.</text>
</comment>
<comment type="subcellular location">
    <subcellularLocation>
        <location evidence="1">Cell inner membrane</location>
        <topology evidence="1">Multi-pass membrane protein</topology>
    </subcellularLocation>
</comment>
<comment type="similarity">
    <text evidence="1">Belongs to the ATPase A chain family.</text>
</comment>
<gene>
    <name evidence="1" type="primary">atpB1</name>
    <name type="ordered locus">VIBHAR_00428</name>
</gene>
<name>ATP61_VIBC1</name>
<dbReference type="EMBL" id="CP000789">
    <property type="protein sequence ID" value="ABU69443.1"/>
    <property type="molecule type" value="Genomic_DNA"/>
</dbReference>
<dbReference type="SMR" id="A7N0Y8"/>
<dbReference type="KEGG" id="vha:VIBHAR_00428"/>
<dbReference type="PATRIC" id="fig|338187.25.peg.2163"/>
<dbReference type="Proteomes" id="UP000008152">
    <property type="component" value="Chromosome I"/>
</dbReference>
<dbReference type="GO" id="GO:0005886">
    <property type="term" value="C:plasma membrane"/>
    <property type="evidence" value="ECO:0007669"/>
    <property type="project" value="UniProtKB-SubCell"/>
</dbReference>
<dbReference type="GO" id="GO:0045259">
    <property type="term" value="C:proton-transporting ATP synthase complex"/>
    <property type="evidence" value="ECO:0007669"/>
    <property type="project" value="UniProtKB-KW"/>
</dbReference>
<dbReference type="GO" id="GO:0046933">
    <property type="term" value="F:proton-transporting ATP synthase activity, rotational mechanism"/>
    <property type="evidence" value="ECO:0007669"/>
    <property type="project" value="UniProtKB-UniRule"/>
</dbReference>
<dbReference type="GO" id="GO:0042777">
    <property type="term" value="P:proton motive force-driven plasma membrane ATP synthesis"/>
    <property type="evidence" value="ECO:0007669"/>
    <property type="project" value="TreeGrafter"/>
</dbReference>
<dbReference type="CDD" id="cd00310">
    <property type="entry name" value="ATP-synt_Fo_a_6"/>
    <property type="match status" value="1"/>
</dbReference>
<dbReference type="FunFam" id="1.20.120.220:FF:000002">
    <property type="entry name" value="ATP synthase subunit a"/>
    <property type="match status" value="1"/>
</dbReference>
<dbReference type="Gene3D" id="1.20.120.220">
    <property type="entry name" value="ATP synthase, F0 complex, subunit A"/>
    <property type="match status" value="1"/>
</dbReference>
<dbReference type="HAMAP" id="MF_01393">
    <property type="entry name" value="ATP_synth_a_bact"/>
    <property type="match status" value="1"/>
</dbReference>
<dbReference type="InterPro" id="IPR045082">
    <property type="entry name" value="ATP_syn_F0_a_bact/chloroplast"/>
</dbReference>
<dbReference type="InterPro" id="IPR000568">
    <property type="entry name" value="ATP_synth_F0_asu"/>
</dbReference>
<dbReference type="InterPro" id="IPR023011">
    <property type="entry name" value="ATP_synth_F0_asu_AS"/>
</dbReference>
<dbReference type="InterPro" id="IPR035908">
    <property type="entry name" value="F0_ATP_A_sf"/>
</dbReference>
<dbReference type="NCBIfam" id="TIGR01131">
    <property type="entry name" value="ATP_synt_6_or_A"/>
    <property type="match status" value="1"/>
</dbReference>
<dbReference type="NCBIfam" id="NF004477">
    <property type="entry name" value="PRK05815.1-1"/>
    <property type="match status" value="1"/>
</dbReference>
<dbReference type="PANTHER" id="PTHR42823">
    <property type="entry name" value="ATP SYNTHASE SUBUNIT A, CHLOROPLASTIC"/>
    <property type="match status" value="1"/>
</dbReference>
<dbReference type="PANTHER" id="PTHR42823:SF3">
    <property type="entry name" value="ATP SYNTHASE SUBUNIT A, CHLOROPLASTIC"/>
    <property type="match status" value="1"/>
</dbReference>
<dbReference type="Pfam" id="PF00119">
    <property type="entry name" value="ATP-synt_A"/>
    <property type="match status" value="1"/>
</dbReference>
<dbReference type="PRINTS" id="PR00123">
    <property type="entry name" value="ATPASEA"/>
</dbReference>
<dbReference type="SUPFAM" id="SSF81336">
    <property type="entry name" value="F1F0 ATP synthase subunit A"/>
    <property type="match status" value="1"/>
</dbReference>
<dbReference type="PROSITE" id="PS00449">
    <property type="entry name" value="ATPASE_A"/>
    <property type="match status" value="1"/>
</dbReference>
<evidence type="ECO:0000255" key="1">
    <source>
        <dbReference type="HAMAP-Rule" id="MF_01393"/>
    </source>
</evidence>
<protein>
    <recommendedName>
        <fullName evidence="1">ATP synthase subunit a 1</fullName>
    </recommendedName>
    <alternativeName>
        <fullName evidence="1">ATP synthase F0 sector subunit a 1</fullName>
    </alternativeName>
    <alternativeName>
        <fullName evidence="1">F-ATPase subunit 6 1</fullName>
    </alternativeName>
</protein>
<accession>A7N0Y8</accession>
<keyword id="KW-0066">ATP synthesis</keyword>
<keyword id="KW-0997">Cell inner membrane</keyword>
<keyword id="KW-1003">Cell membrane</keyword>
<keyword id="KW-0138">CF(0)</keyword>
<keyword id="KW-0375">Hydrogen ion transport</keyword>
<keyword id="KW-0406">Ion transport</keyword>
<keyword id="KW-0472">Membrane</keyword>
<keyword id="KW-0812">Transmembrane</keyword>
<keyword id="KW-1133">Transmembrane helix</keyword>
<keyword id="KW-0813">Transport</keyword>
<reference key="1">
    <citation type="submission" date="2007-08" db="EMBL/GenBank/DDBJ databases">
        <authorList>
            <consortium name="The Vibrio harveyi Genome Sequencing Project"/>
            <person name="Bassler B."/>
            <person name="Clifton S.W."/>
            <person name="Fulton L."/>
            <person name="Delehaunty K."/>
            <person name="Fronick C."/>
            <person name="Harrison M."/>
            <person name="Markivic C."/>
            <person name="Fulton R."/>
            <person name="Tin-Wollam A.-M."/>
            <person name="Shah N."/>
            <person name="Pepin K."/>
            <person name="Nash W."/>
            <person name="Thiruvilangam P."/>
            <person name="Bhonagiri V."/>
            <person name="Waters C."/>
            <person name="Tu K.C."/>
            <person name="Irgon J."/>
            <person name="Wilson R.K."/>
        </authorList>
    </citation>
    <scope>NUCLEOTIDE SEQUENCE [LARGE SCALE GENOMIC DNA]</scope>
    <source>
        <strain>ATCC BAA-1116 / BB120</strain>
    </source>
</reference>
<proteinExistence type="inferred from homology"/>
<feature type="chain" id="PRO_0000362501" description="ATP synthase subunit a 1">
    <location>
        <begin position="1"/>
        <end position="270"/>
    </location>
</feature>
<feature type="transmembrane region" description="Helical" evidence="1">
    <location>
        <begin position="38"/>
        <end position="58"/>
    </location>
</feature>
<feature type="transmembrane region" description="Helical" evidence="1">
    <location>
        <begin position="98"/>
        <end position="118"/>
    </location>
</feature>
<feature type="transmembrane region" description="Helical" evidence="1">
    <location>
        <begin position="143"/>
        <end position="163"/>
    </location>
</feature>
<feature type="transmembrane region" description="Helical" evidence="1">
    <location>
        <begin position="208"/>
        <end position="228"/>
    </location>
</feature>
<feature type="transmembrane region" description="Helical" evidence="1">
    <location>
        <begin position="239"/>
        <end position="259"/>
    </location>
</feature>